<protein>
    <recommendedName>
        <fullName evidence="1">Ribulose bisphosphate carboxylase large chain 2</fullName>
        <shortName evidence="1">RuBisCO large subunit 2</shortName>
        <ecNumber evidence="1">4.1.1.39</ecNumber>
    </recommendedName>
</protein>
<organism>
    <name type="scientific">Nitrobacter winogradskyi (strain ATCC 25391 / DSM 10237 / CIP 104748 / NCIMB 11846 / Nb-255)</name>
    <dbReference type="NCBI Taxonomy" id="323098"/>
    <lineage>
        <taxon>Bacteria</taxon>
        <taxon>Pseudomonadati</taxon>
        <taxon>Pseudomonadota</taxon>
        <taxon>Alphaproteobacteria</taxon>
        <taxon>Hyphomicrobiales</taxon>
        <taxon>Nitrobacteraceae</taxon>
        <taxon>Nitrobacter</taxon>
    </lineage>
</organism>
<keyword id="KW-0113">Calvin cycle</keyword>
<keyword id="KW-0120">Carbon dioxide fixation</keyword>
<keyword id="KW-0456">Lyase</keyword>
<keyword id="KW-0460">Magnesium</keyword>
<keyword id="KW-0479">Metal-binding</keyword>
<keyword id="KW-0503">Monooxygenase</keyword>
<keyword id="KW-0560">Oxidoreductase</keyword>
<keyword id="KW-1185">Reference proteome</keyword>
<gene>
    <name evidence="1" type="primary">cbbL2</name>
    <name type="ordered locus">Nwi_2929</name>
</gene>
<proteinExistence type="inferred from homology"/>
<dbReference type="EC" id="4.1.1.39" evidence="1"/>
<dbReference type="EMBL" id="CP000115">
    <property type="protein sequence ID" value="ABA06179.1"/>
    <property type="molecule type" value="Genomic_DNA"/>
</dbReference>
<dbReference type="RefSeq" id="WP_011316104.1">
    <property type="nucleotide sequence ID" value="NC_007406.1"/>
</dbReference>
<dbReference type="SMR" id="Q3SNG2"/>
<dbReference type="STRING" id="323098.Nwi_2929"/>
<dbReference type="KEGG" id="nwi:Nwi_2929"/>
<dbReference type="eggNOG" id="COG1850">
    <property type="taxonomic scope" value="Bacteria"/>
</dbReference>
<dbReference type="HOGENOM" id="CLU_031450_2_0_5"/>
<dbReference type="OrthoDB" id="9764279at2"/>
<dbReference type="Proteomes" id="UP000002531">
    <property type="component" value="Chromosome"/>
</dbReference>
<dbReference type="GO" id="GO:0000287">
    <property type="term" value="F:magnesium ion binding"/>
    <property type="evidence" value="ECO:0007669"/>
    <property type="project" value="UniProtKB-UniRule"/>
</dbReference>
<dbReference type="GO" id="GO:0004497">
    <property type="term" value="F:monooxygenase activity"/>
    <property type="evidence" value="ECO:0007669"/>
    <property type="project" value="UniProtKB-KW"/>
</dbReference>
<dbReference type="GO" id="GO:0016984">
    <property type="term" value="F:ribulose-bisphosphate carboxylase activity"/>
    <property type="evidence" value="ECO:0007669"/>
    <property type="project" value="UniProtKB-UniRule"/>
</dbReference>
<dbReference type="GO" id="GO:0019253">
    <property type="term" value="P:reductive pentose-phosphate cycle"/>
    <property type="evidence" value="ECO:0007669"/>
    <property type="project" value="UniProtKB-UniRule"/>
</dbReference>
<dbReference type="CDD" id="cd08212">
    <property type="entry name" value="RuBisCO_large_I"/>
    <property type="match status" value="1"/>
</dbReference>
<dbReference type="Gene3D" id="3.20.20.110">
    <property type="entry name" value="Ribulose bisphosphate carboxylase, large subunit, C-terminal domain"/>
    <property type="match status" value="1"/>
</dbReference>
<dbReference type="Gene3D" id="3.30.70.150">
    <property type="entry name" value="RuBisCO large subunit, N-terminal domain"/>
    <property type="match status" value="1"/>
</dbReference>
<dbReference type="HAMAP" id="MF_01338">
    <property type="entry name" value="RuBisCO_L_type1"/>
    <property type="match status" value="1"/>
</dbReference>
<dbReference type="InterPro" id="IPR033966">
    <property type="entry name" value="RuBisCO"/>
</dbReference>
<dbReference type="InterPro" id="IPR020878">
    <property type="entry name" value="RuBisCo_large_chain_AS"/>
</dbReference>
<dbReference type="InterPro" id="IPR000685">
    <property type="entry name" value="RuBisCO_lsu_C"/>
</dbReference>
<dbReference type="InterPro" id="IPR036376">
    <property type="entry name" value="RuBisCO_lsu_C_sf"/>
</dbReference>
<dbReference type="InterPro" id="IPR017443">
    <property type="entry name" value="RuBisCO_lsu_fd_N"/>
</dbReference>
<dbReference type="InterPro" id="IPR036422">
    <property type="entry name" value="RuBisCO_lsu_N_sf"/>
</dbReference>
<dbReference type="InterPro" id="IPR020888">
    <property type="entry name" value="RuBisCO_lsuI"/>
</dbReference>
<dbReference type="NCBIfam" id="NF003252">
    <property type="entry name" value="PRK04208.1"/>
    <property type="match status" value="1"/>
</dbReference>
<dbReference type="PANTHER" id="PTHR42704">
    <property type="entry name" value="RIBULOSE BISPHOSPHATE CARBOXYLASE"/>
    <property type="match status" value="1"/>
</dbReference>
<dbReference type="PANTHER" id="PTHR42704:SF17">
    <property type="entry name" value="RIBULOSE BISPHOSPHATE CARBOXYLASE LARGE CHAIN"/>
    <property type="match status" value="1"/>
</dbReference>
<dbReference type="Pfam" id="PF00016">
    <property type="entry name" value="RuBisCO_large"/>
    <property type="match status" value="1"/>
</dbReference>
<dbReference type="Pfam" id="PF02788">
    <property type="entry name" value="RuBisCO_large_N"/>
    <property type="match status" value="1"/>
</dbReference>
<dbReference type="SFLD" id="SFLDG01052">
    <property type="entry name" value="RuBisCO"/>
    <property type="match status" value="1"/>
</dbReference>
<dbReference type="SFLD" id="SFLDS00014">
    <property type="entry name" value="RuBisCO"/>
    <property type="match status" value="1"/>
</dbReference>
<dbReference type="SFLD" id="SFLDG00301">
    <property type="entry name" value="RuBisCO-like_proteins"/>
    <property type="match status" value="1"/>
</dbReference>
<dbReference type="SUPFAM" id="SSF51649">
    <property type="entry name" value="RuBisCo, C-terminal domain"/>
    <property type="match status" value="1"/>
</dbReference>
<dbReference type="SUPFAM" id="SSF54966">
    <property type="entry name" value="RuBisCO, large subunit, small (N-terminal) domain"/>
    <property type="match status" value="1"/>
</dbReference>
<dbReference type="PROSITE" id="PS00157">
    <property type="entry name" value="RUBISCO_LARGE"/>
    <property type="match status" value="1"/>
</dbReference>
<name>RBL1B_NITWN</name>
<reference key="1">
    <citation type="journal article" date="2006" name="Appl. Environ. Microbiol.">
        <title>Genome sequence of the chemolithoautotrophic nitrite-oxidizing bacterium Nitrobacter winogradskyi Nb-255.</title>
        <authorList>
            <person name="Starkenburg S.R."/>
            <person name="Chain P.S.G."/>
            <person name="Sayavedra-Soto L.A."/>
            <person name="Hauser L."/>
            <person name="Land M.L."/>
            <person name="Larimer F.W."/>
            <person name="Malfatti S.A."/>
            <person name="Klotz M.G."/>
            <person name="Bottomley P.J."/>
            <person name="Arp D.J."/>
            <person name="Hickey W.J."/>
        </authorList>
    </citation>
    <scope>NUCLEOTIDE SEQUENCE [LARGE SCALE GENOMIC DNA]</scope>
    <source>
        <strain>ATCC 25391 / DSM 10237 / CIP 104748 / NCIMB 11846 / Nb-255</strain>
    </source>
</reference>
<feature type="chain" id="PRO_0000251452" description="Ribulose bisphosphate carboxylase large chain 2">
    <location>
        <begin position="1"/>
        <end position="489"/>
    </location>
</feature>
<feature type="active site" description="Proton acceptor" evidence="1">
    <location>
        <position position="180"/>
    </location>
</feature>
<feature type="active site" description="Proton acceptor" evidence="1">
    <location>
        <position position="298"/>
    </location>
</feature>
<feature type="binding site" description="in homodimeric partner" evidence="1">
    <location>
        <position position="128"/>
    </location>
    <ligand>
        <name>substrate</name>
    </ligand>
</feature>
<feature type="binding site" evidence="1">
    <location>
        <position position="178"/>
    </location>
    <ligand>
        <name>substrate</name>
    </ligand>
</feature>
<feature type="binding site" evidence="1">
    <location>
        <position position="182"/>
    </location>
    <ligand>
        <name>substrate</name>
    </ligand>
</feature>
<feature type="binding site" description="via carbamate group" evidence="1">
    <location>
        <position position="206"/>
    </location>
    <ligand>
        <name>Mg(2+)</name>
        <dbReference type="ChEBI" id="CHEBI:18420"/>
    </ligand>
</feature>
<feature type="binding site" evidence="1">
    <location>
        <position position="208"/>
    </location>
    <ligand>
        <name>Mg(2+)</name>
        <dbReference type="ChEBI" id="CHEBI:18420"/>
    </ligand>
</feature>
<feature type="binding site" evidence="1">
    <location>
        <position position="209"/>
    </location>
    <ligand>
        <name>Mg(2+)</name>
        <dbReference type="ChEBI" id="CHEBI:18420"/>
    </ligand>
</feature>
<feature type="binding site" evidence="1">
    <location>
        <position position="299"/>
    </location>
    <ligand>
        <name>substrate</name>
    </ligand>
</feature>
<feature type="binding site" evidence="1">
    <location>
        <position position="331"/>
    </location>
    <ligand>
        <name>substrate</name>
    </ligand>
</feature>
<feature type="binding site" evidence="1">
    <location>
        <position position="383"/>
    </location>
    <ligand>
        <name>substrate</name>
    </ligand>
</feature>
<feature type="site" description="Transition state stabilizer" evidence="1">
    <location>
        <position position="338"/>
    </location>
</feature>
<feature type="modified residue" description="N6-carboxylysine" evidence="1">
    <location>
        <position position="206"/>
    </location>
</feature>
<accession>Q3SNG2</accession>
<evidence type="ECO:0000255" key="1">
    <source>
        <dbReference type="HAMAP-Rule" id="MF_01338"/>
    </source>
</evidence>
<comment type="function">
    <text evidence="1">RuBisCO catalyzes two reactions: the carboxylation of D-ribulose 1,5-bisphosphate, the primary event in carbon dioxide fixation, as well as the oxidative fragmentation of the pentose substrate. Both reactions occur simultaneously and in competition at the same active site.</text>
</comment>
<comment type="catalytic activity">
    <reaction evidence="1">
        <text>2 (2R)-3-phosphoglycerate + 2 H(+) = D-ribulose 1,5-bisphosphate + CO2 + H2O</text>
        <dbReference type="Rhea" id="RHEA:23124"/>
        <dbReference type="ChEBI" id="CHEBI:15377"/>
        <dbReference type="ChEBI" id="CHEBI:15378"/>
        <dbReference type="ChEBI" id="CHEBI:16526"/>
        <dbReference type="ChEBI" id="CHEBI:57870"/>
        <dbReference type="ChEBI" id="CHEBI:58272"/>
        <dbReference type="EC" id="4.1.1.39"/>
    </reaction>
</comment>
<comment type="catalytic activity">
    <reaction evidence="1">
        <text>D-ribulose 1,5-bisphosphate + O2 = 2-phosphoglycolate + (2R)-3-phosphoglycerate + 2 H(+)</text>
        <dbReference type="Rhea" id="RHEA:36631"/>
        <dbReference type="ChEBI" id="CHEBI:15378"/>
        <dbReference type="ChEBI" id="CHEBI:15379"/>
        <dbReference type="ChEBI" id="CHEBI:57870"/>
        <dbReference type="ChEBI" id="CHEBI:58033"/>
        <dbReference type="ChEBI" id="CHEBI:58272"/>
    </reaction>
</comment>
<comment type="cofactor">
    <cofactor evidence="1">
        <name>Mg(2+)</name>
        <dbReference type="ChEBI" id="CHEBI:18420"/>
    </cofactor>
    <text evidence="1">Binds 1 Mg(2+) ion per subunit.</text>
</comment>
<comment type="subunit">
    <text evidence="1">Heterohexadecamer of 8 large chains and 8 small chains.</text>
</comment>
<comment type="miscellaneous">
    <text evidence="1">The basic functional RuBisCO is composed of a large chain homodimer in a 'head-to-tail' conformation. In form I RuBisCO this homodimer is arranged in a barrel-like tetramer with the small subunits forming a tetrameric 'cap' on each end of the 'barrel'.</text>
</comment>
<comment type="similarity">
    <text evidence="1">Belongs to the RuBisCO large chain family. Type I subfamily.</text>
</comment>
<sequence length="489" mass="54148">MNVQNEKSMTVRGKDRYKSGVMSYKKMGYWEPDYTPKDTDVICLFRVTPQDGVDPIEASAAVAGESSTATWTVVWTDRLTAAEKYRAKCYRVDPVPGAEGQYFAYIAYDLDLFEPGSISNLTASVIGNVFGFKPLKALRLEDMRLPVAYVKTFKGPPTGIVVERERLDKFGRPLLGATVKPKLGLSGRNYGRVVYEALKGGLDFTKDDENINSQPFMHWRERFLYCMEAVNRAQAATGEIKGSYLNVTAATMEDMYERAEFAKELGSVVVMIDLVIGYTAIQSMSNWARKNDMILHLHRAGHSTYTRQRSHGVSFRVISKWMRLAGVDHIHAGTVVGKLEGDPLTTRGFYDICREEYNPTQLEHGIFFDQNWASLNKVMPVASGGIHAGQMHQLIQHLGEDVVLQFGGGTIGHPMGIQAGATANRVALEAMILARNEGRDYVSEGPEILAKAAASCTPLKQALEVWKDVTFDYASTDAPDYVPTAVPAA</sequence>